<gene>
    <name evidence="9" type="primary">SAPK6</name>
    <name evidence="8" type="synonym">RK1</name>
    <name type="ordered locus">Os02g0551100</name>
    <name type="ordered locus">LOC_Os02g34600</name>
    <name type="ORF">OJ1004_H01.2</name>
    <name evidence="11" type="ORF">OsJ_07099</name>
    <name type="ORF">P0451A10.35</name>
</gene>
<proteinExistence type="evidence at protein level"/>
<evidence type="ECO:0000250" key="1"/>
<evidence type="ECO:0000255" key="2">
    <source>
        <dbReference type="PROSITE-ProRule" id="PRU00159"/>
    </source>
</evidence>
<evidence type="ECO:0000255" key="3">
    <source>
        <dbReference type="PROSITE-ProRule" id="PRU10027"/>
    </source>
</evidence>
<evidence type="ECO:0000256" key="4">
    <source>
        <dbReference type="SAM" id="MobiDB-lite"/>
    </source>
</evidence>
<evidence type="ECO:0000269" key="5">
    <source>
    </source>
</evidence>
<evidence type="ECO:0000269" key="6">
    <source>
    </source>
</evidence>
<evidence type="ECO:0000269" key="7">
    <source>
    </source>
</evidence>
<evidence type="ECO:0000303" key="8">
    <source>
    </source>
</evidence>
<evidence type="ECO:0000303" key="9">
    <source ref="3"/>
</evidence>
<evidence type="ECO:0000305" key="10"/>
<evidence type="ECO:0000312" key="11">
    <source>
        <dbReference type="EMBL" id="EEE57169.1"/>
    </source>
</evidence>
<sequence length="365" mass="41803">MEKYELLKDIGSGNFGVARLMRNRETKELVAMKYIPRGLKIDENVAREIINHRSLRHPNIIRFKEVVLTPTHLAIVMEYAAGGELFDRICSAGRFSEDESRYFFQQLICGVSYCHFMQICHRDLKLENTLLDGSPAPRLKICDFGYSKSSLLHSKPKSTVGTPAYIAPEVLSRREYDGKMADVWSCGVTLYVMLVGAYPFEDPDDPKNFRKTIGRIVSIQYKIPEYVHISQDCRQLLSRIFVANPAKRITIREIRNHPWFMKNLPRELTEAAQAKYYKKDNSARTFSDQTVDEIMKIVQEAKTPPPSSTPVAGFGWTEEEEQEDGKNPDDDEGDRDEEEGEEGDSEDEYTKQVKQAHASCDLQKS</sequence>
<protein>
    <recommendedName>
        <fullName>Serine/threonine-protein kinase SAPK6</fullName>
        <ecNumber>2.7.11.1</ecNumber>
    </recommendedName>
    <alternativeName>
        <fullName>Osmotic stress/abscisic acid-activated protein kinase 6</fullName>
    </alternativeName>
    <alternativeName>
        <fullName evidence="9">stress-activated protein kinase 6</fullName>
        <shortName evidence="9">OsSAPK6</shortName>
    </alternativeName>
</protein>
<comment type="function">
    <text evidence="6 7 10">May play a role in signal transduction of hyperosmotic response (Probable). Can phosphorylate ABI5 in vitro (PubMed:21055780). Can phosphorylate BZIP46 in vitro (PubMed:22301130).</text>
</comment>
<comment type="catalytic activity">
    <reaction>
        <text>L-seryl-[protein] + ATP = O-phospho-L-seryl-[protein] + ADP + H(+)</text>
        <dbReference type="Rhea" id="RHEA:17989"/>
        <dbReference type="Rhea" id="RHEA-COMP:9863"/>
        <dbReference type="Rhea" id="RHEA-COMP:11604"/>
        <dbReference type="ChEBI" id="CHEBI:15378"/>
        <dbReference type="ChEBI" id="CHEBI:29999"/>
        <dbReference type="ChEBI" id="CHEBI:30616"/>
        <dbReference type="ChEBI" id="CHEBI:83421"/>
        <dbReference type="ChEBI" id="CHEBI:456216"/>
        <dbReference type="EC" id="2.7.11.1"/>
    </reaction>
</comment>
<comment type="catalytic activity">
    <reaction>
        <text>L-threonyl-[protein] + ATP = O-phospho-L-threonyl-[protein] + ADP + H(+)</text>
        <dbReference type="Rhea" id="RHEA:46608"/>
        <dbReference type="Rhea" id="RHEA-COMP:11060"/>
        <dbReference type="Rhea" id="RHEA-COMP:11605"/>
        <dbReference type="ChEBI" id="CHEBI:15378"/>
        <dbReference type="ChEBI" id="CHEBI:30013"/>
        <dbReference type="ChEBI" id="CHEBI:30616"/>
        <dbReference type="ChEBI" id="CHEBI:61977"/>
        <dbReference type="ChEBI" id="CHEBI:456216"/>
        <dbReference type="EC" id="2.7.11.1"/>
    </reaction>
</comment>
<comment type="activity regulation">
    <text>Activated by hyperosmotic stress.</text>
</comment>
<comment type="subunit">
    <text evidence="7">Interacts with BZIP46.</text>
</comment>
<comment type="tissue specificity">
    <text evidence="5">Expressed in leaf blades and leaf sheaths. Expressed in shoots and roots of young seedlings.</text>
</comment>
<comment type="induction">
    <text evidence="5">Weakly induced by hyperosmotic stress in leaf blades, leaf sheaths and roots. Weakly induced by abscisic acid (ABA) in leaf blades and roots.</text>
</comment>
<comment type="PTM">
    <text evidence="1">May be phosphorylated.</text>
</comment>
<comment type="similarity">
    <text evidence="2">Belongs to the protein kinase superfamily. Ser/Thr protein kinase family.</text>
</comment>
<dbReference type="EC" id="2.7.11.1"/>
<dbReference type="EMBL" id="AB125307">
    <property type="protein sequence ID" value="BAD18002.1"/>
    <property type="molecule type" value="mRNA"/>
</dbReference>
<dbReference type="EMBL" id="DQ285022">
    <property type="protein sequence ID" value="ABB89146.1"/>
    <property type="molecule type" value="mRNA"/>
</dbReference>
<dbReference type="EMBL" id="JF733764">
    <property type="protein sequence ID" value="AEF00935.1"/>
    <property type="molecule type" value="mRNA"/>
</dbReference>
<dbReference type="EMBL" id="AP004038">
    <property type="protein sequence ID" value="BAD15474.1"/>
    <property type="molecule type" value="Genomic_DNA"/>
</dbReference>
<dbReference type="EMBL" id="AP004775">
    <property type="protein sequence ID" value="BAD33270.1"/>
    <property type="molecule type" value="Genomic_DNA"/>
</dbReference>
<dbReference type="EMBL" id="AP008208">
    <property type="protein sequence ID" value="BAF09013.1"/>
    <property type="molecule type" value="Genomic_DNA"/>
</dbReference>
<dbReference type="EMBL" id="AP014958">
    <property type="protein sequence ID" value="BAS79168.1"/>
    <property type="molecule type" value="Genomic_DNA"/>
</dbReference>
<dbReference type="EMBL" id="CM000139">
    <property type="protein sequence ID" value="EEE57169.1"/>
    <property type="molecule type" value="Genomic_DNA"/>
</dbReference>
<dbReference type="EMBL" id="AK067395">
    <property type="protein sequence ID" value="BAG90400.1"/>
    <property type="molecule type" value="mRNA"/>
</dbReference>
<dbReference type="RefSeq" id="XP_015626727.1">
    <property type="nucleotide sequence ID" value="XM_015771241.1"/>
</dbReference>
<dbReference type="SMR" id="Q6ZI44"/>
<dbReference type="FunCoup" id="Q6ZI44">
    <property type="interactions" value="584"/>
</dbReference>
<dbReference type="STRING" id="39947.Q6ZI44"/>
<dbReference type="PaxDb" id="39947-Q6ZI44"/>
<dbReference type="EnsemblPlants" id="Os02t0551100-01">
    <property type="protein sequence ID" value="Os02t0551100-01"/>
    <property type="gene ID" value="Os02g0551100"/>
</dbReference>
<dbReference type="Gramene" id="Os02t0551100-01">
    <property type="protein sequence ID" value="Os02t0551100-01"/>
    <property type="gene ID" value="Os02g0551100"/>
</dbReference>
<dbReference type="KEGG" id="dosa:Os02g0551100"/>
<dbReference type="eggNOG" id="KOG0583">
    <property type="taxonomic scope" value="Eukaryota"/>
</dbReference>
<dbReference type="HOGENOM" id="CLU_000288_63_0_1"/>
<dbReference type="InParanoid" id="Q6ZI44"/>
<dbReference type="OMA" id="IRYCHDC"/>
<dbReference type="OrthoDB" id="193931at2759"/>
<dbReference type="Proteomes" id="UP000000763">
    <property type="component" value="Chromosome 2"/>
</dbReference>
<dbReference type="Proteomes" id="UP000007752">
    <property type="component" value="Chromosome 2"/>
</dbReference>
<dbReference type="Proteomes" id="UP000059680">
    <property type="component" value="Chromosome 2"/>
</dbReference>
<dbReference type="GO" id="GO:0005524">
    <property type="term" value="F:ATP binding"/>
    <property type="evidence" value="ECO:0007669"/>
    <property type="project" value="UniProtKB-KW"/>
</dbReference>
<dbReference type="GO" id="GO:0106310">
    <property type="term" value="F:protein serine kinase activity"/>
    <property type="evidence" value="ECO:0007669"/>
    <property type="project" value="RHEA"/>
</dbReference>
<dbReference type="GO" id="GO:0004674">
    <property type="term" value="F:protein serine/threonine kinase activity"/>
    <property type="evidence" value="ECO:0000314"/>
    <property type="project" value="UniProtKB"/>
</dbReference>
<dbReference type="GO" id="GO:0009738">
    <property type="term" value="P:abscisic acid-activated signaling pathway"/>
    <property type="evidence" value="ECO:0007669"/>
    <property type="project" value="UniProtKB-KW"/>
</dbReference>
<dbReference type="GO" id="GO:0006468">
    <property type="term" value="P:protein phosphorylation"/>
    <property type="evidence" value="ECO:0000314"/>
    <property type="project" value="UniProtKB"/>
</dbReference>
<dbReference type="CDD" id="cd14662">
    <property type="entry name" value="STKc_SnRK2"/>
    <property type="match status" value="1"/>
</dbReference>
<dbReference type="FunFam" id="1.10.510.10:FF:000132">
    <property type="entry name" value="Serine/threonine-protein kinase SRK2A"/>
    <property type="match status" value="1"/>
</dbReference>
<dbReference type="FunFam" id="3.30.200.20:FF:000045">
    <property type="entry name" value="Serine/threonine-protein kinase SRK2E"/>
    <property type="match status" value="1"/>
</dbReference>
<dbReference type="Gene3D" id="3.30.200.20">
    <property type="entry name" value="Phosphorylase Kinase, domain 1"/>
    <property type="match status" value="1"/>
</dbReference>
<dbReference type="Gene3D" id="1.10.510.10">
    <property type="entry name" value="Transferase(Phosphotransferase) domain 1"/>
    <property type="match status" value="1"/>
</dbReference>
<dbReference type="InterPro" id="IPR011009">
    <property type="entry name" value="Kinase-like_dom_sf"/>
</dbReference>
<dbReference type="InterPro" id="IPR000719">
    <property type="entry name" value="Prot_kinase_dom"/>
</dbReference>
<dbReference type="InterPro" id="IPR017441">
    <property type="entry name" value="Protein_kinase_ATP_BS"/>
</dbReference>
<dbReference type="InterPro" id="IPR008271">
    <property type="entry name" value="Ser/Thr_kinase_AS"/>
</dbReference>
<dbReference type="PANTHER" id="PTHR24343">
    <property type="entry name" value="SERINE/THREONINE KINASE"/>
    <property type="match status" value="1"/>
</dbReference>
<dbReference type="PANTHER" id="PTHR24343:SF376">
    <property type="entry name" value="SERINE_THREONINE-PROTEIN KINASE SRK2A-RELATED"/>
    <property type="match status" value="1"/>
</dbReference>
<dbReference type="Pfam" id="PF00069">
    <property type="entry name" value="Pkinase"/>
    <property type="match status" value="1"/>
</dbReference>
<dbReference type="SMART" id="SM00220">
    <property type="entry name" value="S_TKc"/>
    <property type="match status" value="1"/>
</dbReference>
<dbReference type="SUPFAM" id="SSF56112">
    <property type="entry name" value="Protein kinase-like (PK-like)"/>
    <property type="match status" value="1"/>
</dbReference>
<dbReference type="PROSITE" id="PS00107">
    <property type="entry name" value="PROTEIN_KINASE_ATP"/>
    <property type="match status" value="1"/>
</dbReference>
<dbReference type="PROSITE" id="PS50011">
    <property type="entry name" value="PROTEIN_KINASE_DOM"/>
    <property type="match status" value="1"/>
</dbReference>
<dbReference type="PROSITE" id="PS00108">
    <property type="entry name" value="PROTEIN_KINASE_ST"/>
    <property type="match status" value="1"/>
</dbReference>
<keyword id="KW-0938">Abscisic acid signaling pathway</keyword>
<keyword id="KW-0067">ATP-binding</keyword>
<keyword id="KW-0418">Kinase</keyword>
<keyword id="KW-0547">Nucleotide-binding</keyword>
<keyword id="KW-0597">Phosphoprotein</keyword>
<keyword id="KW-1185">Reference proteome</keyword>
<keyword id="KW-0723">Serine/threonine-protein kinase</keyword>
<keyword id="KW-0808">Transferase</keyword>
<accession>Q6ZI44</accession>
<accession>Q0E0H5</accession>
<feature type="chain" id="PRO_0000086633" description="Serine/threonine-protein kinase SAPK6">
    <location>
        <begin position="1"/>
        <end position="365"/>
    </location>
</feature>
<feature type="domain" description="Protein kinase" evidence="2">
    <location>
        <begin position="4"/>
        <end position="260"/>
    </location>
</feature>
<feature type="region of interest" description="Disordered" evidence="4">
    <location>
        <begin position="298"/>
        <end position="365"/>
    </location>
</feature>
<feature type="compositionally biased region" description="Acidic residues" evidence="4">
    <location>
        <begin position="317"/>
        <end position="347"/>
    </location>
</feature>
<feature type="active site" description="Proton acceptor" evidence="2 3">
    <location>
        <position position="123"/>
    </location>
</feature>
<feature type="binding site" evidence="2">
    <location>
        <begin position="10"/>
        <end position="18"/>
    </location>
    <ligand>
        <name>ATP</name>
        <dbReference type="ChEBI" id="CHEBI:30616"/>
    </ligand>
</feature>
<feature type="binding site" evidence="2">
    <location>
        <position position="33"/>
    </location>
    <ligand>
        <name>ATP</name>
        <dbReference type="ChEBI" id="CHEBI:30616"/>
    </ligand>
</feature>
<reference key="1">
    <citation type="journal article" date="2004" name="Plant Cell">
        <title>Differential activation of the rice sucrose nonfermenting1-related protein kinase2 family by hyperosmotic stress and abscisic acid.</title>
        <authorList>
            <person name="Kobayashi Y."/>
            <person name="Yamamoto S."/>
            <person name="Minami H."/>
            <person name="Kagaya Y."/>
            <person name="Hattori T."/>
        </authorList>
    </citation>
    <scope>NUCLEOTIDE SEQUENCE [MRNA]</scope>
    <scope>TISSUE SPECIFICITY</scope>
    <scope>INDUCTION</scope>
    <scope>NOMENCLATURE</scope>
    <source>
        <strain>cv. Nipponbare</strain>
    </source>
</reference>
<reference key="2">
    <citation type="journal article" date="2007" name="Plant Mol. Biol.">
        <title>A rice dehydration-inducible SNF1-related protein kinase 2 phosphorylates an abscisic acid responsive element-binding factor and associates with ABA signaling.</title>
        <authorList>
            <person name="Chae M.J."/>
            <person name="Lee J.S."/>
            <person name="Nam M.H."/>
            <person name="Cho K."/>
            <person name="Hong J.Y."/>
            <person name="Yi S.A."/>
            <person name="Suh S.C."/>
            <person name="Yoon I.S."/>
        </authorList>
    </citation>
    <scope>NUCLEOTIDE SEQUENCE [MRNA]</scope>
    <source>
        <strain>cv. Ilpoombyeo</strain>
    </source>
</reference>
<reference key="3">
    <citation type="journal article" date="2013" name="Plant Mol. Biol. Rep.">
        <title>Genome-wide phylogenetic analysis of stress-activated protein kinase genes in rice (OsSAPKs) and expression profiling in response to Xanthomonas oryzae pv. oryzicola infection.</title>
        <authorList>
            <person name="Xu M.-R."/>
            <person name="Huang L.-Y."/>
            <person name="Zhang F."/>
            <person name="Zhu L.-H."/>
            <person name="Zhou Y.-L."/>
            <person name="Li Z.-K."/>
        </authorList>
    </citation>
    <scope>NUCLEOTIDE SEQUENCE [MRNA]</scope>
</reference>
<reference key="4">
    <citation type="journal article" date="2005" name="Nature">
        <title>The map-based sequence of the rice genome.</title>
        <authorList>
            <consortium name="International rice genome sequencing project (IRGSP)"/>
        </authorList>
    </citation>
    <scope>NUCLEOTIDE SEQUENCE [LARGE SCALE GENOMIC DNA]</scope>
    <source>
        <strain>cv. Nipponbare</strain>
    </source>
</reference>
<reference key="5">
    <citation type="journal article" date="2008" name="Nucleic Acids Res.">
        <title>The rice annotation project database (RAP-DB): 2008 update.</title>
        <authorList>
            <consortium name="The rice annotation project (RAP)"/>
        </authorList>
    </citation>
    <scope>GENOME REANNOTATION</scope>
    <source>
        <strain>cv. Nipponbare</strain>
    </source>
</reference>
<reference key="6">
    <citation type="journal article" date="2013" name="Rice">
        <title>Improvement of the Oryza sativa Nipponbare reference genome using next generation sequence and optical map data.</title>
        <authorList>
            <person name="Kawahara Y."/>
            <person name="de la Bastide M."/>
            <person name="Hamilton J.P."/>
            <person name="Kanamori H."/>
            <person name="McCombie W.R."/>
            <person name="Ouyang S."/>
            <person name="Schwartz D.C."/>
            <person name="Tanaka T."/>
            <person name="Wu J."/>
            <person name="Zhou S."/>
            <person name="Childs K.L."/>
            <person name="Davidson R.M."/>
            <person name="Lin H."/>
            <person name="Quesada-Ocampo L."/>
            <person name="Vaillancourt B."/>
            <person name="Sakai H."/>
            <person name="Lee S.S."/>
            <person name="Kim J."/>
            <person name="Numa H."/>
            <person name="Itoh T."/>
            <person name="Buell C.R."/>
            <person name="Matsumoto T."/>
        </authorList>
    </citation>
    <scope>GENOME REANNOTATION</scope>
    <source>
        <strain>cv. Nipponbare</strain>
    </source>
</reference>
<reference key="7">
    <citation type="journal article" date="2005" name="PLoS Biol.">
        <title>The genomes of Oryza sativa: a history of duplications.</title>
        <authorList>
            <person name="Yu J."/>
            <person name="Wang J."/>
            <person name="Lin W."/>
            <person name="Li S."/>
            <person name="Li H."/>
            <person name="Zhou J."/>
            <person name="Ni P."/>
            <person name="Dong W."/>
            <person name="Hu S."/>
            <person name="Zeng C."/>
            <person name="Zhang J."/>
            <person name="Zhang Y."/>
            <person name="Li R."/>
            <person name="Xu Z."/>
            <person name="Li S."/>
            <person name="Li X."/>
            <person name="Zheng H."/>
            <person name="Cong L."/>
            <person name="Lin L."/>
            <person name="Yin J."/>
            <person name="Geng J."/>
            <person name="Li G."/>
            <person name="Shi J."/>
            <person name="Liu J."/>
            <person name="Lv H."/>
            <person name="Li J."/>
            <person name="Wang J."/>
            <person name="Deng Y."/>
            <person name="Ran L."/>
            <person name="Shi X."/>
            <person name="Wang X."/>
            <person name="Wu Q."/>
            <person name="Li C."/>
            <person name="Ren X."/>
            <person name="Wang J."/>
            <person name="Wang X."/>
            <person name="Li D."/>
            <person name="Liu D."/>
            <person name="Zhang X."/>
            <person name="Ji Z."/>
            <person name="Zhao W."/>
            <person name="Sun Y."/>
            <person name="Zhang Z."/>
            <person name="Bao J."/>
            <person name="Han Y."/>
            <person name="Dong L."/>
            <person name="Ji J."/>
            <person name="Chen P."/>
            <person name="Wu S."/>
            <person name="Liu J."/>
            <person name="Xiao Y."/>
            <person name="Bu D."/>
            <person name="Tan J."/>
            <person name="Yang L."/>
            <person name="Ye C."/>
            <person name="Zhang J."/>
            <person name="Xu J."/>
            <person name="Zhou Y."/>
            <person name="Yu Y."/>
            <person name="Zhang B."/>
            <person name="Zhuang S."/>
            <person name="Wei H."/>
            <person name="Liu B."/>
            <person name="Lei M."/>
            <person name="Yu H."/>
            <person name="Li Y."/>
            <person name="Xu H."/>
            <person name="Wei S."/>
            <person name="He X."/>
            <person name="Fang L."/>
            <person name="Zhang Z."/>
            <person name="Zhang Y."/>
            <person name="Huang X."/>
            <person name="Su Z."/>
            <person name="Tong W."/>
            <person name="Li J."/>
            <person name="Tong Z."/>
            <person name="Li S."/>
            <person name="Ye J."/>
            <person name="Wang L."/>
            <person name="Fang L."/>
            <person name="Lei T."/>
            <person name="Chen C.-S."/>
            <person name="Chen H.-C."/>
            <person name="Xu Z."/>
            <person name="Li H."/>
            <person name="Huang H."/>
            <person name="Zhang F."/>
            <person name="Xu H."/>
            <person name="Li N."/>
            <person name="Zhao C."/>
            <person name="Li S."/>
            <person name="Dong L."/>
            <person name="Huang Y."/>
            <person name="Li L."/>
            <person name="Xi Y."/>
            <person name="Qi Q."/>
            <person name="Li W."/>
            <person name="Zhang B."/>
            <person name="Hu W."/>
            <person name="Zhang Y."/>
            <person name="Tian X."/>
            <person name="Jiao Y."/>
            <person name="Liang X."/>
            <person name="Jin J."/>
            <person name="Gao L."/>
            <person name="Zheng W."/>
            <person name="Hao B."/>
            <person name="Liu S.-M."/>
            <person name="Wang W."/>
            <person name="Yuan L."/>
            <person name="Cao M."/>
            <person name="McDermott J."/>
            <person name="Samudrala R."/>
            <person name="Wang J."/>
            <person name="Wong G.K.-S."/>
            <person name="Yang H."/>
        </authorList>
    </citation>
    <scope>NUCLEOTIDE SEQUENCE [LARGE SCALE GENOMIC DNA]</scope>
    <source>
        <strain>cv. Nipponbare</strain>
    </source>
</reference>
<reference key="8">
    <citation type="journal article" date="2003" name="Science">
        <title>Collection, mapping, and annotation of over 28,000 cDNA clones from japonica rice.</title>
        <authorList>
            <consortium name="The rice full-length cDNA consortium"/>
        </authorList>
    </citation>
    <scope>NUCLEOTIDE SEQUENCE [LARGE SCALE MRNA]</scope>
    <source>
        <strain>cv. Nipponbare</strain>
    </source>
</reference>
<reference key="9">
    <citation type="journal article" date="2011" name="Phytochemistry">
        <title>Phosphorylation-mediated regulation of a rice ABA responsive element binding factor.</title>
        <authorList>
            <person name="Hong J.Y."/>
            <person name="Chae M.J."/>
            <person name="Lee I.S."/>
            <person name="Lee Y.N."/>
            <person name="Nam M.H."/>
            <person name="Kim D.Y."/>
            <person name="Byun M.O."/>
            <person name="Yoon I.S."/>
        </authorList>
    </citation>
    <scope>FUNCTION</scope>
</reference>
<reference key="10">
    <citation type="journal article" date="2012" name="Plant Physiol.">
        <title>Constitutive activation of transcription factor OsbZIP46 improves drought tolerance in rice.</title>
        <authorList>
            <person name="Tang N."/>
            <person name="Zhang H."/>
            <person name="Li X."/>
            <person name="Xiao J."/>
            <person name="Xiong L."/>
        </authorList>
    </citation>
    <scope>FUNCTION</scope>
    <scope>INTERACTION WITH BZIP46</scope>
</reference>
<organism>
    <name type="scientific">Oryza sativa subsp. japonica</name>
    <name type="common">Rice</name>
    <dbReference type="NCBI Taxonomy" id="39947"/>
    <lineage>
        <taxon>Eukaryota</taxon>
        <taxon>Viridiplantae</taxon>
        <taxon>Streptophyta</taxon>
        <taxon>Embryophyta</taxon>
        <taxon>Tracheophyta</taxon>
        <taxon>Spermatophyta</taxon>
        <taxon>Magnoliopsida</taxon>
        <taxon>Liliopsida</taxon>
        <taxon>Poales</taxon>
        <taxon>Poaceae</taxon>
        <taxon>BOP clade</taxon>
        <taxon>Oryzoideae</taxon>
        <taxon>Oryzeae</taxon>
        <taxon>Oryzinae</taxon>
        <taxon>Oryza</taxon>
        <taxon>Oryza sativa</taxon>
    </lineage>
</organism>
<name>SAPK6_ORYSJ</name>